<protein>
    <recommendedName>
        <fullName evidence="1">Cell division protein ZapB</fullName>
    </recommendedName>
</protein>
<gene>
    <name evidence="1" type="primary">zapB</name>
    <name type="ordered locus">YPN_3756</name>
    <name type="ORF">YP516_4275</name>
</gene>
<comment type="function">
    <text evidence="1">Non-essential, abundant cell division factor that is required for proper Z-ring formation. It is recruited early to the divisome by direct interaction with FtsZ, stimulating Z-ring assembly and thereby promoting cell division earlier in the cell cycle. Its recruitment to the Z-ring requires functional FtsA or ZipA.</text>
</comment>
<comment type="subunit">
    <text evidence="1">Homodimer. The ends of the coiled-coil dimer bind to each other, forming polymers. Interacts with FtsZ.</text>
</comment>
<comment type="subcellular location">
    <subcellularLocation>
        <location>Cytoplasm</location>
    </subcellularLocation>
    <text evidence="1">Localizes to the septum at mid-cell, in a FtsZ-like pattern.</text>
</comment>
<comment type="similarity">
    <text evidence="1">Belongs to the ZapB family.</text>
</comment>
<evidence type="ECO:0000255" key="1">
    <source>
        <dbReference type="HAMAP-Rule" id="MF_01196"/>
    </source>
</evidence>
<organism>
    <name type="scientific">Yersinia pestis bv. Antiqua (strain Nepal516)</name>
    <dbReference type="NCBI Taxonomy" id="377628"/>
    <lineage>
        <taxon>Bacteria</taxon>
        <taxon>Pseudomonadati</taxon>
        <taxon>Pseudomonadota</taxon>
        <taxon>Gammaproteobacteria</taxon>
        <taxon>Enterobacterales</taxon>
        <taxon>Yersiniaceae</taxon>
        <taxon>Yersinia</taxon>
    </lineage>
</organism>
<keyword id="KW-0131">Cell cycle</keyword>
<keyword id="KW-0132">Cell division</keyword>
<keyword id="KW-0175">Coiled coil</keyword>
<keyword id="KW-0963">Cytoplasm</keyword>
<keyword id="KW-0717">Septation</keyword>
<proteinExistence type="inferred from homology"/>
<accession>Q1CD47</accession>
<accession>D1Q2B5</accession>
<reference key="1">
    <citation type="journal article" date="2006" name="J. Bacteriol.">
        <title>Complete genome sequence of Yersinia pestis strains Antiqua and Nepal516: evidence of gene reduction in an emerging pathogen.</title>
        <authorList>
            <person name="Chain P.S.G."/>
            <person name="Hu P."/>
            <person name="Malfatti S.A."/>
            <person name="Radnedge L."/>
            <person name="Larimer F."/>
            <person name="Vergez L.M."/>
            <person name="Worsham P."/>
            <person name="Chu M.C."/>
            <person name="Andersen G.L."/>
        </authorList>
    </citation>
    <scope>NUCLEOTIDE SEQUENCE [LARGE SCALE GENOMIC DNA]</scope>
    <source>
        <strain>Nepal516</strain>
    </source>
</reference>
<reference key="2">
    <citation type="submission" date="2009-04" db="EMBL/GenBank/DDBJ databases">
        <title>Yersinia pestis Nepal516A whole genome shotgun sequencing project.</title>
        <authorList>
            <person name="Plunkett G. III"/>
            <person name="Anderson B.D."/>
            <person name="Baumler D.J."/>
            <person name="Burland V."/>
            <person name="Cabot E.L."/>
            <person name="Glasner J.D."/>
            <person name="Mau B."/>
            <person name="Neeno-Eckwall E."/>
            <person name="Perna N.T."/>
            <person name="Munk A.C."/>
            <person name="Tapia R."/>
            <person name="Green L.D."/>
            <person name="Rogers Y.C."/>
            <person name="Detter J.C."/>
            <person name="Bruce D.C."/>
            <person name="Brettin T.S."/>
        </authorList>
    </citation>
    <scope>NUCLEOTIDE SEQUENCE [LARGE SCALE GENOMIC DNA]</scope>
    <source>
        <strain>Nepal516</strain>
    </source>
</reference>
<sequence>MSFEVFEKLEVKVQQAIDTITLLQMEIEELKEKNNTLTQEVQDAAGSREALVRENEQLKQEQHVWQDRLRALLGKMEEV</sequence>
<feature type="chain" id="PRO_0000333948" description="Cell division protein ZapB">
    <location>
        <begin position="1"/>
        <end position="79"/>
    </location>
</feature>
<feature type="coiled-coil region" evidence="1">
    <location>
        <begin position="6"/>
        <end position="78"/>
    </location>
</feature>
<dbReference type="EMBL" id="CP000305">
    <property type="protein sequence ID" value="ABG20083.1"/>
    <property type="molecule type" value="Genomic_DNA"/>
</dbReference>
<dbReference type="EMBL" id="ACNQ01000019">
    <property type="protein sequence ID" value="EEO74668.1"/>
    <property type="molecule type" value="Genomic_DNA"/>
</dbReference>
<dbReference type="RefSeq" id="WP_002208953.1">
    <property type="nucleotide sequence ID" value="NZ_ACNQ01000019.1"/>
</dbReference>
<dbReference type="SMR" id="Q1CD47"/>
<dbReference type="GeneID" id="96663567"/>
<dbReference type="KEGG" id="ypn:YPN_3756"/>
<dbReference type="HOGENOM" id="CLU_171174_2_0_6"/>
<dbReference type="Proteomes" id="UP000008936">
    <property type="component" value="Chromosome"/>
</dbReference>
<dbReference type="GO" id="GO:0005737">
    <property type="term" value="C:cytoplasm"/>
    <property type="evidence" value="ECO:0007669"/>
    <property type="project" value="UniProtKB-SubCell"/>
</dbReference>
<dbReference type="GO" id="GO:0000917">
    <property type="term" value="P:division septum assembly"/>
    <property type="evidence" value="ECO:0007669"/>
    <property type="project" value="UniProtKB-KW"/>
</dbReference>
<dbReference type="GO" id="GO:0043093">
    <property type="term" value="P:FtsZ-dependent cytokinesis"/>
    <property type="evidence" value="ECO:0007669"/>
    <property type="project" value="UniProtKB-UniRule"/>
</dbReference>
<dbReference type="Gene3D" id="1.20.5.340">
    <property type="match status" value="1"/>
</dbReference>
<dbReference type="HAMAP" id="MF_01196">
    <property type="entry name" value="ZapB"/>
    <property type="match status" value="1"/>
</dbReference>
<dbReference type="InterPro" id="IPR009252">
    <property type="entry name" value="Cell_div_ZapB"/>
</dbReference>
<dbReference type="NCBIfam" id="NF011951">
    <property type="entry name" value="PRK15422.1"/>
    <property type="match status" value="1"/>
</dbReference>
<dbReference type="Pfam" id="PF06005">
    <property type="entry name" value="ZapB"/>
    <property type="match status" value="1"/>
</dbReference>
<name>ZAPB_YERPN</name>